<comment type="function">
    <text evidence="1">Part of the ABC transporter complex MetNIQ involved in methionine import. Responsible for energy coupling to the transport system.</text>
</comment>
<comment type="catalytic activity">
    <reaction evidence="1">
        <text>L-methionine(out) + ATP + H2O = L-methionine(in) + ADP + phosphate + H(+)</text>
        <dbReference type="Rhea" id="RHEA:29779"/>
        <dbReference type="ChEBI" id="CHEBI:15377"/>
        <dbReference type="ChEBI" id="CHEBI:15378"/>
        <dbReference type="ChEBI" id="CHEBI:30616"/>
        <dbReference type="ChEBI" id="CHEBI:43474"/>
        <dbReference type="ChEBI" id="CHEBI:57844"/>
        <dbReference type="ChEBI" id="CHEBI:456216"/>
        <dbReference type="EC" id="7.4.2.11"/>
    </reaction>
</comment>
<comment type="catalytic activity">
    <reaction evidence="1">
        <text>D-methionine(out) + ATP + H2O = D-methionine(in) + ADP + phosphate + H(+)</text>
        <dbReference type="Rhea" id="RHEA:29767"/>
        <dbReference type="ChEBI" id="CHEBI:15377"/>
        <dbReference type="ChEBI" id="CHEBI:15378"/>
        <dbReference type="ChEBI" id="CHEBI:30616"/>
        <dbReference type="ChEBI" id="CHEBI:43474"/>
        <dbReference type="ChEBI" id="CHEBI:57932"/>
        <dbReference type="ChEBI" id="CHEBI:456216"/>
        <dbReference type="EC" id="7.4.2.11"/>
    </reaction>
</comment>
<comment type="subunit">
    <text evidence="1">The complex is composed of two ATP-binding proteins (MetN), two transmembrane proteins (MetI) and a solute-binding protein (MetQ).</text>
</comment>
<comment type="subcellular location">
    <subcellularLocation>
        <location evidence="1">Cell inner membrane</location>
        <topology evidence="1">Peripheral membrane protein</topology>
    </subcellularLocation>
</comment>
<comment type="similarity">
    <text evidence="1">Belongs to the ABC transporter superfamily. Methionine importer (TC 3.A.1.24) family.</text>
</comment>
<comment type="sequence caution" evidence="2">
    <conflict type="erroneous initiation">
        <sequence resource="EMBL-CDS" id="AAW85181"/>
    </conflict>
</comment>
<protein>
    <recommendedName>
        <fullName evidence="1">Methionine import ATP-binding protein MetN</fullName>
        <ecNumber evidence="1">7.4.2.11</ecNumber>
    </recommendedName>
</protein>
<name>METN_ALIF1</name>
<evidence type="ECO:0000255" key="1">
    <source>
        <dbReference type="HAMAP-Rule" id="MF_01719"/>
    </source>
</evidence>
<evidence type="ECO:0000305" key="2"/>
<keyword id="KW-0029">Amino-acid transport</keyword>
<keyword id="KW-0067">ATP-binding</keyword>
<keyword id="KW-0997">Cell inner membrane</keyword>
<keyword id="KW-1003">Cell membrane</keyword>
<keyword id="KW-0472">Membrane</keyword>
<keyword id="KW-0547">Nucleotide-binding</keyword>
<keyword id="KW-1185">Reference proteome</keyword>
<keyword id="KW-1278">Translocase</keyword>
<keyword id="KW-0813">Transport</keyword>
<proteinExistence type="inferred from homology"/>
<sequence>MIEINRVNKIFYQGAKEINALKDINLHIAQGTIFGVIGSSGAGKSTLIRCVNMLERPTNGEVVVDGVDLTKLSSSELSKARRNIGMIFQHFNLLASRTVFDNVALPLELAGKSKHDIQKKVTELLDLVGLADKHHTYPANLSGGQKQRVAIARALSTDPKVLLCDEATSALDPATTKSILELIKDLNRKLSITILIITHEMEVVKNICHEVAIIGGGELVEKGAVSDIFAHPKTALAQEFIRATLDLSIPEDFKARLKDTYVEGSYPLIRLEFTGSTVDAPVISQISREFDIDISILSSDIDYAGGVKFGLMLAEVFGNQESTQKAIEFLRNHHVKVEVLGYVV</sequence>
<reference key="1">
    <citation type="journal article" date="2005" name="Proc. Natl. Acad. Sci. U.S.A.">
        <title>Complete genome sequence of Vibrio fischeri: a symbiotic bacterium with pathogenic congeners.</title>
        <authorList>
            <person name="Ruby E.G."/>
            <person name="Urbanowski M."/>
            <person name="Campbell J."/>
            <person name="Dunn A."/>
            <person name="Faini M."/>
            <person name="Gunsalus R."/>
            <person name="Lostroh P."/>
            <person name="Lupp C."/>
            <person name="McCann J."/>
            <person name="Millikan D."/>
            <person name="Schaefer A."/>
            <person name="Stabb E."/>
            <person name="Stevens A."/>
            <person name="Visick K."/>
            <person name="Whistler C."/>
            <person name="Greenberg E.P."/>
        </authorList>
    </citation>
    <scope>NUCLEOTIDE SEQUENCE [LARGE SCALE GENOMIC DNA]</scope>
    <source>
        <strain>ATCC 700601 / ES114</strain>
    </source>
</reference>
<accession>Q5E715</accession>
<gene>
    <name evidence="1" type="primary">metN</name>
    <name type="ordered locus">VF_0686</name>
</gene>
<organism>
    <name type="scientific">Aliivibrio fischeri (strain ATCC 700601 / ES114)</name>
    <name type="common">Vibrio fischeri</name>
    <dbReference type="NCBI Taxonomy" id="312309"/>
    <lineage>
        <taxon>Bacteria</taxon>
        <taxon>Pseudomonadati</taxon>
        <taxon>Pseudomonadota</taxon>
        <taxon>Gammaproteobacteria</taxon>
        <taxon>Vibrionales</taxon>
        <taxon>Vibrionaceae</taxon>
        <taxon>Aliivibrio</taxon>
    </lineage>
</organism>
<feature type="chain" id="PRO_0000270434" description="Methionine import ATP-binding protein MetN">
    <location>
        <begin position="1"/>
        <end position="344"/>
    </location>
</feature>
<feature type="domain" description="ABC transporter" evidence="1">
    <location>
        <begin position="2"/>
        <end position="241"/>
    </location>
</feature>
<feature type="binding site" evidence="1">
    <location>
        <begin position="38"/>
        <end position="45"/>
    </location>
    <ligand>
        <name>ATP</name>
        <dbReference type="ChEBI" id="CHEBI:30616"/>
    </ligand>
</feature>
<dbReference type="EC" id="7.4.2.11" evidence="1"/>
<dbReference type="EMBL" id="CP000020">
    <property type="protein sequence ID" value="AAW85181.1"/>
    <property type="status" value="ALT_INIT"/>
    <property type="molecule type" value="Genomic_DNA"/>
</dbReference>
<dbReference type="RefSeq" id="WP_047863666.1">
    <property type="nucleotide sequence ID" value="NC_006840.2"/>
</dbReference>
<dbReference type="RefSeq" id="YP_204069.3">
    <property type="nucleotide sequence ID" value="NC_006840.2"/>
</dbReference>
<dbReference type="SMR" id="Q5E715"/>
<dbReference type="STRING" id="312309.VF_0686"/>
<dbReference type="EnsemblBacteria" id="AAW85181">
    <property type="protein sequence ID" value="AAW85181"/>
    <property type="gene ID" value="VF_0686"/>
</dbReference>
<dbReference type="GeneID" id="54163341"/>
<dbReference type="KEGG" id="vfi:VF_0686"/>
<dbReference type="PATRIC" id="fig|312309.11.peg.679"/>
<dbReference type="eggNOG" id="COG1135">
    <property type="taxonomic scope" value="Bacteria"/>
</dbReference>
<dbReference type="HOGENOM" id="CLU_000604_1_3_6"/>
<dbReference type="OrthoDB" id="9802264at2"/>
<dbReference type="Proteomes" id="UP000000537">
    <property type="component" value="Chromosome I"/>
</dbReference>
<dbReference type="GO" id="GO:0009276">
    <property type="term" value="C:Gram-negative-bacterium-type cell wall"/>
    <property type="evidence" value="ECO:0007669"/>
    <property type="project" value="InterPro"/>
</dbReference>
<dbReference type="GO" id="GO:0005886">
    <property type="term" value="C:plasma membrane"/>
    <property type="evidence" value="ECO:0007669"/>
    <property type="project" value="UniProtKB-SubCell"/>
</dbReference>
<dbReference type="GO" id="GO:0033232">
    <property type="term" value="F:ABC-type D-methionine transporter activity"/>
    <property type="evidence" value="ECO:0007669"/>
    <property type="project" value="UniProtKB-EC"/>
</dbReference>
<dbReference type="GO" id="GO:0005524">
    <property type="term" value="F:ATP binding"/>
    <property type="evidence" value="ECO:0007669"/>
    <property type="project" value="UniProtKB-KW"/>
</dbReference>
<dbReference type="GO" id="GO:0016887">
    <property type="term" value="F:ATP hydrolysis activity"/>
    <property type="evidence" value="ECO:0007669"/>
    <property type="project" value="InterPro"/>
</dbReference>
<dbReference type="CDD" id="cd03258">
    <property type="entry name" value="ABC_MetN_methionine_transporter"/>
    <property type="match status" value="1"/>
</dbReference>
<dbReference type="FunFam" id="3.40.50.300:FF:000233">
    <property type="entry name" value="Methionine import ATP-binding protein MetN"/>
    <property type="match status" value="1"/>
</dbReference>
<dbReference type="Gene3D" id="3.30.70.260">
    <property type="match status" value="1"/>
</dbReference>
<dbReference type="Gene3D" id="3.40.50.300">
    <property type="entry name" value="P-loop containing nucleotide triphosphate hydrolases"/>
    <property type="match status" value="1"/>
</dbReference>
<dbReference type="InterPro" id="IPR003593">
    <property type="entry name" value="AAA+_ATPase"/>
</dbReference>
<dbReference type="InterPro" id="IPR012692">
    <property type="entry name" value="ABC_MetN_proteobac"/>
</dbReference>
<dbReference type="InterPro" id="IPR003439">
    <property type="entry name" value="ABC_transporter-like_ATP-bd"/>
</dbReference>
<dbReference type="InterPro" id="IPR017871">
    <property type="entry name" value="ABC_transporter-like_CS"/>
</dbReference>
<dbReference type="InterPro" id="IPR045865">
    <property type="entry name" value="ACT-like_dom_sf"/>
</dbReference>
<dbReference type="InterPro" id="IPR041701">
    <property type="entry name" value="MetN_ABC"/>
</dbReference>
<dbReference type="InterPro" id="IPR050086">
    <property type="entry name" value="MetN_ABC_transporter-like"/>
</dbReference>
<dbReference type="InterPro" id="IPR018449">
    <property type="entry name" value="NIL_domain"/>
</dbReference>
<dbReference type="InterPro" id="IPR027417">
    <property type="entry name" value="P-loop_NTPase"/>
</dbReference>
<dbReference type="NCBIfam" id="TIGR02314">
    <property type="entry name" value="ABC_MetN"/>
    <property type="match status" value="1"/>
</dbReference>
<dbReference type="PANTHER" id="PTHR43166">
    <property type="entry name" value="AMINO ACID IMPORT ATP-BINDING PROTEIN"/>
    <property type="match status" value="1"/>
</dbReference>
<dbReference type="PANTHER" id="PTHR43166:SF30">
    <property type="entry name" value="METHIONINE IMPORT ATP-BINDING PROTEIN METN"/>
    <property type="match status" value="1"/>
</dbReference>
<dbReference type="Pfam" id="PF00005">
    <property type="entry name" value="ABC_tran"/>
    <property type="match status" value="1"/>
</dbReference>
<dbReference type="Pfam" id="PF09383">
    <property type="entry name" value="NIL"/>
    <property type="match status" value="1"/>
</dbReference>
<dbReference type="SMART" id="SM00382">
    <property type="entry name" value="AAA"/>
    <property type="match status" value="1"/>
</dbReference>
<dbReference type="SMART" id="SM00930">
    <property type="entry name" value="NIL"/>
    <property type="match status" value="1"/>
</dbReference>
<dbReference type="SUPFAM" id="SSF55021">
    <property type="entry name" value="ACT-like"/>
    <property type="match status" value="1"/>
</dbReference>
<dbReference type="SUPFAM" id="SSF52540">
    <property type="entry name" value="P-loop containing nucleoside triphosphate hydrolases"/>
    <property type="match status" value="1"/>
</dbReference>
<dbReference type="PROSITE" id="PS00211">
    <property type="entry name" value="ABC_TRANSPORTER_1"/>
    <property type="match status" value="1"/>
</dbReference>
<dbReference type="PROSITE" id="PS50893">
    <property type="entry name" value="ABC_TRANSPORTER_2"/>
    <property type="match status" value="1"/>
</dbReference>
<dbReference type="PROSITE" id="PS51264">
    <property type="entry name" value="METN"/>
    <property type="match status" value="1"/>
</dbReference>